<proteinExistence type="inferred from homology"/>
<gene>
    <name type="primary">MPH3</name>
    <name type="ORF">AWRI1631_40020</name>
</gene>
<reference key="1">
    <citation type="journal article" date="2008" name="FEMS Yeast Res.">
        <title>Comparative genome analysis of a Saccharomyces cerevisiae wine strain.</title>
        <authorList>
            <person name="Borneman A.R."/>
            <person name="Forgan A.H."/>
            <person name="Pretorius I.S."/>
            <person name="Chambers P.J."/>
        </authorList>
    </citation>
    <scope>NUCLEOTIDE SEQUENCE [LARGE SCALE GENOMIC DNA]</scope>
    <source>
        <strain>AWRI1631</strain>
    </source>
</reference>
<name>MPH3_YEAS6</name>
<accession>B5VF36</accession>
<evidence type="ECO:0000250" key="1"/>
<evidence type="ECO:0000255" key="2"/>
<evidence type="ECO:0000256" key="3">
    <source>
        <dbReference type="SAM" id="MobiDB-lite"/>
    </source>
</evidence>
<evidence type="ECO:0000305" key="4"/>
<keyword id="KW-1003">Cell membrane</keyword>
<keyword id="KW-0462">Maltose metabolism</keyword>
<keyword id="KW-0472">Membrane</keyword>
<keyword id="KW-0762">Sugar transport</keyword>
<keyword id="KW-0812">Transmembrane</keyword>
<keyword id="KW-1133">Transmembrane helix</keyword>
<keyword id="KW-0813">Transport</keyword>
<protein>
    <recommendedName>
        <fullName>Alpha-glucosides permease MPH3</fullName>
    </recommendedName>
    <alternativeName>
        <fullName>Maltose transport protein 3</fullName>
    </alternativeName>
</protein>
<dbReference type="EMBL" id="ABSV01000292">
    <property type="protein sequence ID" value="EDZ73457.1"/>
    <property type="molecule type" value="Genomic_DNA"/>
</dbReference>
<dbReference type="SMR" id="B5VF36"/>
<dbReference type="Proteomes" id="UP000008988">
    <property type="component" value="Unassembled WGS sequence"/>
</dbReference>
<dbReference type="GO" id="GO:0005886">
    <property type="term" value="C:plasma membrane"/>
    <property type="evidence" value="ECO:0007669"/>
    <property type="project" value="UniProtKB-SubCell"/>
</dbReference>
<dbReference type="GO" id="GO:0005351">
    <property type="term" value="F:carbohydrate:proton symporter activity"/>
    <property type="evidence" value="ECO:0007669"/>
    <property type="project" value="TreeGrafter"/>
</dbReference>
<dbReference type="GO" id="GO:0000023">
    <property type="term" value="P:maltose metabolic process"/>
    <property type="evidence" value="ECO:0007669"/>
    <property type="project" value="UniProtKB-KW"/>
</dbReference>
<dbReference type="FunFam" id="1.20.1250.20:FF:000254">
    <property type="entry name" value="MAL31p Maltose permease"/>
    <property type="match status" value="1"/>
</dbReference>
<dbReference type="Gene3D" id="1.20.1250.20">
    <property type="entry name" value="MFS general substrate transporter like domains"/>
    <property type="match status" value="1"/>
</dbReference>
<dbReference type="InterPro" id="IPR020846">
    <property type="entry name" value="MFS_dom"/>
</dbReference>
<dbReference type="InterPro" id="IPR005828">
    <property type="entry name" value="MFS_sugar_transport-like"/>
</dbReference>
<dbReference type="InterPro" id="IPR050360">
    <property type="entry name" value="MFS_Sugar_Transporters"/>
</dbReference>
<dbReference type="InterPro" id="IPR036259">
    <property type="entry name" value="MFS_trans_sf"/>
</dbReference>
<dbReference type="InterPro" id="IPR003663">
    <property type="entry name" value="Sugar/inositol_transpt"/>
</dbReference>
<dbReference type="InterPro" id="IPR005829">
    <property type="entry name" value="Sugar_transporter_CS"/>
</dbReference>
<dbReference type="NCBIfam" id="TIGR00879">
    <property type="entry name" value="SP"/>
    <property type="match status" value="1"/>
</dbReference>
<dbReference type="PANTHER" id="PTHR48022:SF5">
    <property type="entry name" value="ALPHA-GLUCOSIDES PERMEASE MPH2-RELATED"/>
    <property type="match status" value="1"/>
</dbReference>
<dbReference type="PANTHER" id="PTHR48022">
    <property type="entry name" value="PLASTIDIC GLUCOSE TRANSPORTER 4"/>
    <property type="match status" value="1"/>
</dbReference>
<dbReference type="Pfam" id="PF00083">
    <property type="entry name" value="Sugar_tr"/>
    <property type="match status" value="1"/>
</dbReference>
<dbReference type="SUPFAM" id="SSF103473">
    <property type="entry name" value="MFS general substrate transporter"/>
    <property type="match status" value="1"/>
</dbReference>
<dbReference type="PROSITE" id="PS50850">
    <property type="entry name" value="MFS"/>
    <property type="match status" value="1"/>
</dbReference>
<dbReference type="PROSITE" id="PS00217">
    <property type="entry name" value="SUGAR_TRANSPORT_2"/>
    <property type="match status" value="1"/>
</dbReference>
<sequence length="602" mass="67270">MKNLSFLINRRKENTSDSNVYPGKAKSHEPSWIEMDDQTKKDGLDIVHVEFSPDTRAPSDSNKVITEIFDATEDAKEADESERGMPLATALNTYPKAAAWSLLVSTTLIMEGYDTAILGAFYALPIFQRKFGSQNDKTGEWEISASWQIGLTLCYMAGEIVGLQLTGPSVDLVGNRYTLIIALFFLAAFTFILYFCNSLGMIAVGQALCGMPWGCFQCLTVSYASEICPLALRYYLTTYSNLCWLFGQLFAAGIMKNSQKKYADSELGYKLPFALQWILPVPLALGIFFAPESPWWLVKKGRFDEARRSLRRTLSGKGPEKEILVTLEVDKIKVTIDKEKRLTSKEGSYSDCFEDKINRRRTRITCLCWAGQATCGSILIGYSTYFYEKAGVSTEMSFTFSIIQYCLGICATFLSWWASKYFGRYDLYAFGLAFQTIVFFIIGGLGCSSTHGSKMGSGSLLMAVAFFYNLGIAPVVFCLVSEMPSSRLRTKTIILARNTYNVVSIICSVLILYQLNSKKWNWGAKSGFFWGVLCFCTLIWAVVDLPETAGKTFVEINELFKLGVSARKFKSTKVDPFVVKNPPKDVSHNDPKGDIEASIAEE</sequence>
<organism>
    <name type="scientific">Saccharomyces cerevisiae (strain AWRI1631)</name>
    <name type="common">Baker's yeast</name>
    <dbReference type="NCBI Taxonomy" id="545124"/>
    <lineage>
        <taxon>Eukaryota</taxon>
        <taxon>Fungi</taxon>
        <taxon>Dikarya</taxon>
        <taxon>Ascomycota</taxon>
        <taxon>Saccharomycotina</taxon>
        <taxon>Saccharomycetes</taxon>
        <taxon>Saccharomycetales</taxon>
        <taxon>Saccharomycetaceae</taxon>
        <taxon>Saccharomyces</taxon>
    </lineage>
</organism>
<comment type="function">
    <text evidence="1">High-affinity uptake of maltose and maltotriose. Also transports alpha-methylglucoside, glucose and turanose but not melezitose or trehalose (By similarity).</text>
</comment>
<comment type="subcellular location">
    <subcellularLocation>
        <location evidence="1">Cell membrane</location>
        <topology evidence="1">Multi-pass membrane protein</topology>
    </subcellularLocation>
</comment>
<comment type="induction">
    <text evidence="1">By maltose and maltotriose. Repressed by glucose (By similarity).</text>
</comment>
<comment type="similarity">
    <text evidence="4">Belongs to the major facilitator superfamily. Sugar transporter (TC 2.A.1.1) family.</text>
</comment>
<feature type="chain" id="PRO_0000391711" description="Alpha-glucosides permease MPH3">
    <location>
        <begin position="1"/>
        <end position="602"/>
    </location>
</feature>
<feature type="topological domain" description="Cytoplasmic" evidence="1">
    <location>
        <begin position="1"/>
        <end position="106"/>
    </location>
</feature>
<feature type="transmembrane region" description="Helical; Name=1" evidence="2">
    <location>
        <begin position="107"/>
        <end position="127"/>
    </location>
</feature>
<feature type="topological domain" description="Extracellular" evidence="1">
    <location>
        <begin position="128"/>
        <end position="142"/>
    </location>
</feature>
<feature type="transmembrane region" description="Helical; Name=2" evidence="2">
    <location>
        <begin position="143"/>
        <end position="163"/>
    </location>
</feature>
<feature type="topological domain" description="Cytoplasmic" evidence="1">
    <location>
        <begin position="164"/>
        <end position="178"/>
    </location>
</feature>
<feature type="transmembrane region" description="Helical; Name=3" evidence="2">
    <location>
        <begin position="179"/>
        <end position="199"/>
    </location>
</feature>
<feature type="topological domain" description="Extracellular" evidence="1">
    <location>
        <position position="200"/>
    </location>
</feature>
<feature type="transmembrane region" description="Helical; Name=4" evidence="2">
    <location>
        <begin position="201"/>
        <end position="221"/>
    </location>
</feature>
<feature type="topological domain" description="Cytoplasmic" evidence="1">
    <location>
        <begin position="222"/>
        <end position="234"/>
    </location>
</feature>
<feature type="transmembrane region" description="Helical; Name=5" evidence="2">
    <location>
        <begin position="235"/>
        <end position="255"/>
    </location>
</feature>
<feature type="topological domain" description="Extracellular" evidence="1">
    <location>
        <begin position="256"/>
        <end position="270"/>
    </location>
</feature>
<feature type="transmembrane region" description="Helical; Name=6" evidence="2">
    <location>
        <begin position="271"/>
        <end position="291"/>
    </location>
</feature>
<feature type="topological domain" description="Cytoplasmic" evidence="1">
    <location>
        <begin position="292"/>
        <end position="363"/>
    </location>
</feature>
<feature type="transmembrane region" description="Helical; Name=7" evidence="2">
    <location>
        <begin position="364"/>
        <end position="384"/>
    </location>
</feature>
<feature type="topological domain" description="Extracellular" evidence="1">
    <location>
        <begin position="385"/>
        <end position="397"/>
    </location>
</feature>
<feature type="transmembrane region" description="Helical; Name=8" evidence="2">
    <location>
        <begin position="398"/>
        <end position="418"/>
    </location>
</feature>
<feature type="topological domain" description="Cytoplasmic" evidence="1">
    <location>
        <begin position="419"/>
        <end position="426"/>
    </location>
</feature>
<feature type="transmembrane region" description="Helical; Name=9" evidence="2">
    <location>
        <begin position="427"/>
        <end position="447"/>
    </location>
</feature>
<feature type="topological domain" description="Extracellular" evidence="1">
    <location>
        <begin position="448"/>
        <end position="459"/>
    </location>
</feature>
<feature type="transmembrane region" description="Helical; Name=10" evidence="2">
    <location>
        <begin position="460"/>
        <end position="480"/>
    </location>
</feature>
<feature type="topological domain" description="Cytoplasmic" evidence="1">
    <location>
        <begin position="481"/>
        <end position="492"/>
    </location>
</feature>
<feature type="transmembrane region" description="Helical; Name=11" evidence="2">
    <location>
        <begin position="493"/>
        <end position="513"/>
    </location>
</feature>
<feature type="topological domain" description="Extracellular" evidence="1">
    <location>
        <begin position="514"/>
        <end position="525"/>
    </location>
</feature>
<feature type="transmembrane region" description="Helical; Name=12" evidence="2">
    <location>
        <begin position="526"/>
        <end position="546"/>
    </location>
</feature>
<feature type="topological domain" description="Cytoplasmic" evidence="1">
    <location>
        <begin position="547"/>
        <end position="602"/>
    </location>
</feature>
<feature type="region of interest" description="Disordered" evidence="3">
    <location>
        <begin position="580"/>
        <end position="602"/>
    </location>
</feature>
<feature type="compositionally biased region" description="Basic and acidic residues" evidence="3">
    <location>
        <begin position="582"/>
        <end position="595"/>
    </location>
</feature>